<organism>
    <name type="scientific">Mycobacterium sp. (strain KMS)</name>
    <dbReference type="NCBI Taxonomy" id="189918"/>
    <lineage>
        <taxon>Bacteria</taxon>
        <taxon>Bacillati</taxon>
        <taxon>Actinomycetota</taxon>
        <taxon>Actinomycetes</taxon>
        <taxon>Mycobacteriales</taxon>
        <taxon>Mycobacteriaceae</taxon>
        <taxon>Mycobacterium</taxon>
    </lineage>
</organism>
<accession>A1UBY5</accession>
<protein>
    <recommendedName>
        <fullName evidence="1">DNA-directed RNA polymerase subunit alpha</fullName>
        <shortName evidence="1">RNAP subunit alpha</shortName>
        <ecNumber evidence="1">2.7.7.6</ecNumber>
    </recommendedName>
    <alternativeName>
        <fullName evidence="1">RNA polymerase subunit alpha</fullName>
    </alternativeName>
    <alternativeName>
        <fullName evidence="1">Transcriptase subunit alpha</fullName>
    </alternativeName>
</protein>
<evidence type="ECO:0000255" key="1">
    <source>
        <dbReference type="HAMAP-Rule" id="MF_00059"/>
    </source>
</evidence>
<evidence type="ECO:0000256" key="2">
    <source>
        <dbReference type="SAM" id="MobiDB-lite"/>
    </source>
</evidence>
<keyword id="KW-0240">DNA-directed RNA polymerase</keyword>
<keyword id="KW-0548">Nucleotidyltransferase</keyword>
<keyword id="KW-0804">Transcription</keyword>
<keyword id="KW-0808">Transferase</keyword>
<sequence length="350" mass="38066">MLISQRPTLSEETVADNRSRFVIEPLEPGFGYTLGNSLRRTLLSSIPGAAVTSIRIDGVLHEFTTVPGVKEDVTDIILNLKSLVVSSEEDEPVTMYLRKQGPGEVTAGDIVPPAGVTVHNPEMHIATLNDKGKLEVELVVERGRGYVPAVQNKASGAEIGRIPVDSIYSPVLKVTYKVEATRVEQRTDFDKLILDVETKNSITPRDALASAGKTLVELFGLARELNVEAEGIEIGPSPAEADHIASFALPIDDLDLTVRSYNCLKREGVHTVGELVARTESDLLDIRNFGQKSIDEVKIKLHQLGLSLKDSPATFDPSEVAGYDAATGTWNSDAGYDLEDNQDYAETEQL</sequence>
<reference key="1">
    <citation type="submission" date="2006-12" db="EMBL/GenBank/DDBJ databases">
        <title>Complete sequence of chromosome of Mycobacterium sp. KMS.</title>
        <authorList>
            <consortium name="US DOE Joint Genome Institute"/>
            <person name="Copeland A."/>
            <person name="Lucas S."/>
            <person name="Lapidus A."/>
            <person name="Barry K."/>
            <person name="Detter J.C."/>
            <person name="Glavina del Rio T."/>
            <person name="Hammon N."/>
            <person name="Israni S."/>
            <person name="Dalin E."/>
            <person name="Tice H."/>
            <person name="Pitluck S."/>
            <person name="Kiss H."/>
            <person name="Brettin T."/>
            <person name="Bruce D."/>
            <person name="Han C."/>
            <person name="Tapia R."/>
            <person name="Gilna P."/>
            <person name="Schmutz J."/>
            <person name="Larimer F."/>
            <person name="Land M."/>
            <person name="Hauser L."/>
            <person name="Kyrpides N."/>
            <person name="Mikhailova N."/>
            <person name="Miller C.D."/>
            <person name="Richardson P."/>
        </authorList>
    </citation>
    <scope>NUCLEOTIDE SEQUENCE [LARGE SCALE GENOMIC DNA]</scope>
    <source>
        <strain>KMS</strain>
    </source>
</reference>
<comment type="function">
    <text evidence="1">DNA-dependent RNA polymerase catalyzes the transcription of DNA into RNA using the four ribonucleoside triphosphates as substrates.</text>
</comment>
<comment type="catalytic activity">
    <reaction evidence="1">
        <text>RNA(n) + a ribonucleoside 5'-triphosphate = RNA(n+1) + diphosphate</text>
        <dbReference type="Rhea" id="RHEA:21248"/>
        <dbReference type="Rhea" id="RHEA-COMP:14527"/>
        <dbReference type="Rhea" id="RHEA-COMP:17342"/>
        <dbReference type="ChEBI" id="CHEBI:33019"/>
        <dbReference type="ChEBI" id="CHEBI:61557"/>
        <dbReference type="ChEBI" id="CHEBI:140395"/>
        <dbReference type="EC" id="2.7.7.6"/>
    </reaction>
</comment>
<comment type="subunit">
    <text evidence="1">Homodimer. The RNAP catalytic core consists of 2 alpha, 1 beta, 1 beta' and 1 omega subunit. When a sigma factor is associated with the core the holoenzyme is formed, which can initiate transcription.</text>
</comment>
<comment type="domain">
    <text evidence="1">The N-terminal domain is essential for RNAP assembly and basal transcription, whereas the C-terminal domain is involved in interaction with transcriptional regulators and with upstream promoter elements.</text>
</comment>
<comment type="similarity">
    <text evidence="1">Belongs to the RNA polymerase alpha chain family.</text>
</comment>
<name>RPOA_MYCSK</name>
<proteinExistence type="inferred from homology"/>
<gene>
    <name evidence="1" type="primary">rpoA</name>
    <name type="ordered locus">Mkms_1130</name>
</gene>
<feature type="chain" id="PRO_0000296837" description="DNA-directed RNA polymerase subunit alpha">
    <location>
        <begin position="1"/>
        <end position="350"/>
    </location>
</feature>
<feature type="region of interest" description="Alpha N-terminal domain (alpha-NTD)" evidence="1">
    <location>
        <begin position="1"/>
        <end position="226"/>
    </location>
</feature>
<feature type="region of interest" description="Alpha C-terminal domain (alpha-CTD)" evidence="1">
    <location>
        <begin position="241"/>
        <end position="350"/>
    </location>
</feature>
<feature type="region of interest" description="Disordered" evidence="2">
    <location>
        <begin position="326"/>
        <end position="350"/>
    </location>
</feature>
<feature type="compositionally biased region" description="Acidic residues" evidence="2">
    <location>
        <begin position="336"/>
        <end position="350"/>
    </location>
</feature>
<dbReference type="EC" id="2.7.7.6" evidence="1"/>
<dbReference type="EMBL" id="CP000518">
    <property type="protein sequence ID" value="ABL90343.1"/>
    <property type="molecule type" value="Genomic_DNA"/>
</dbReference>
<dbReference type="SMR" id="A1UBY5"/>
<dbReference type="STRING" id="189918.Mkms_1130"/>
<dbReference type="KEGG" id="mkm:Mkms_1130"/>
<dbReference type="HOGENOM" id="CLU_053084_0_1_11"/>
<dbReference type="OrthoDB" id="9805706at2"/>
<dbReference type="GO" id="GO:0005737">
    <property type="term" value="C:cytoplasm"/>
    <property type="evidence" value="ECO:0007669"/>
    <property type="project" value="UniProtKB-ARBA"/>
</dbReference>
<dbReference type="GO" id="GO:0000428">
    <property type="term" value="C:DNA-directed RNA polymerase complex"/>
    <property type="evidence" value="ECO:0007669"/>
    <property type="project" value="UniProtKB-KW"/>
</dbReference>
<dbReference type="GO" id="GO:0003677">
    <property type="term" value="F:DNA binding"/>
    <property type="evidence" value="ECO:0007669"/>
    <property type="project" value="UniProtKB-UniRule"/>
</dbReference>
<dbReference type="GO" id="GO:0003899">
    <property type="term" value="F:DNA-directed RNA polymerase activity"/>
    <property type="evidence" value="ECO:0007669"/>
    <property type="project" value="UniProtKB-UniRule"/>
</dbReference>
<dbReference type="GO" id="GO:0046983">
    <property type="term" value="F:protein dimerization activity"/>
    <property type="evidence" value="ECO:0007669"/>
    <property type="project" value="InterPro"/>
</dbReference>
<dbReference type="GO" id="GO:0006351">
    <property type="term" value="P:DNA-templated transcription"/>
    <property type="evidence" value="ECO:0007669"/>
    <property type="project" value="UniProtKB-UniRule"/>
</dbReference>
<dbReference type="CDD" id="cd06928">
    <property type="entry name" value="RNAP_alpha_NTD"/>
    <property type="match status" value="1"/>
</dbReference>
<dbReference type="FunFam" id="1.10.150.20:FF:000001">
    <property type="entry name" value="DNA-directed RNA polymerase subunit alpha"/>
    <property type="match status" value="1"/>
</dbReference>
<dbReference type="FunFam" id="2.170.120.12:FF:000001">
    <property type="entry name" value="DNA-directed RNA polymerase subunit alpha"/>
    <property type="match status" value="1"/>
</dbReference>
<dbReference type="Gene3D" id="1.10.150.20">
    <property type="entry name" value="5' to 3' exonuclease, C-terminal subdomain"/>
    <property type="match status" value="1"/>
</dbReference>
<dbReference type="Gene3D" id="2.170.120.12">
    <property type="entry name" value="DNA-directed RNA polymerase, insert domain"/>
    <property type="match status" value="1"/>
</dbReference>
<dbReference type="Gene3D" id="3.30.1360.10">
    <property type="entry name" value="RNA polymerase, RBP11-like subunit"/>
    <property type="match status" value="1"/>
</dbReference>
<dbReference type="HAMAP" id="MF_00059">
    <property type="entry name" value="RNApol_bact_RpoA"/>
    <property type="match status" value="1"/>
</dbReference>
<dbReference type="InterPro" id="IPR011262">
    <property type="entry name" value="DNA-dir_RNA_pol_insert"/>
</dbReference>
<dbReference type="InterPro" id="IPR011263">
    <property type="entry name" value="DNA-dir_RNA_pol_RpoA/D/Rpb3"/>
</dbReference>
<dbReference type="InterPro" id="IPR011773">
    <property type="entry name" value="DNA-dir_RpoA"/>
</dbReference>
<dbReference type="InterPro" id="IPR036603">
    <property type="entry name" value="RBP11-like"/>
</dbReference>
<dbReference type="InterPro" id="IPR011260">
    <property type="entry name" value="RNAP_asu_C"/>
</dbReference>
<dbReference type="InterPro" id="IPR036643">
    <property type="entry name" value="RNApol_insert_sf"/>
</dbReference>
<dbReference type="NCBIfam" id="NF003513">
    <property type="entry name" value="PRK05182.1-2"/>
    <property type="match status" value="1"/>
</dbReference>
<dbReference type="NCBIfam" id="NF003514">
    <property type="entry name" value="PRK05182.1-4"/>
    <property type="match status" value="1"/>
</dbReference>
<dbReference type="NCBIfam" id="NF003519">
    <property type="entry name" value="PRK05182.2-5"/>
    <property type="match status" value="1"/>
</dbReference>
<dbReference type="NCBIfam" id="TIGR02027">
    <property type="entry name" value="rpoA"/>
    <property type="match status" value="1"/>
</dbReference>
<dbReference type="Pfam" id="PF01000">
    <property type="entry name" value="RNA_pol_A_bac"/>
    <property type="match status" value="1"/>
</dbReference>
<dbReference type="Pfam" id="PF03118">
    <property type="entry name" value="RNA_pol_A_CTD"/>
    <property type="match status" value="1"/>
</dbReference>
<dbReference type="Pfam" id="PF01193">
    <property type="entry name" value="RNA_pol_L"/>
    <property type="match status" value="1"/>
</dbReference>
<dbReference type="SMART" id="SM00662">
    <property type="entry name" value="RPOLD"/>
    <property type="match status" value="1"/>
</dbReference>
<dbReference type="SUPFAM" id="SSF47789">
    <property type="entry name" value="C-terminal domain of RNA polymerase alpha subunit"/>
    <property type="match status" value="1"/>
</dbReference>
<dbReference type="SUPFAM" id="SSF56553">
    <property type="entry name" value="Insert subdomain of RNA polymerase alpha subunit"/>
    <property type="match status" value="1"/>
</dbReference>
<dbReference type="SUPFAM" id="SSF55257">
    <property type="entry name" value="RBP11-like subunits of RNA polymerase"/>
    <property type="match status" value="1"/>
</dbReference>